<feature type="chain" id="PRO_0000315624" description="Single-strand DNA endonuclease 1">
    <location>
        <begin position="1"/>
        <end position="600"/>
    </location>
</feature>
<feature type="region of interest" description="N-domain">
    <location>
        <begin position="1"/>
        <end position="97"/>
    </location>
</feature>
<feature type="region of interest" description="XPG-N domain" evidence="2">
    <location>
        <begin position="2"/>
        <end position="97"/>
    </location>
</feature>
<feature type="region of interest" description="I-domain">
    <location>
        <begin position="130"/>
        <end position="219"/>
    </location>
</feature>
<feature type="region of interest" description="I-domain" evidence="4">
    <location>
        <begin position="130"/>
        <end position="218"/>
    </location>
</feature>
<feature type="region of interest" description="XPG-I domain" evidence="2">
    <location>
        <begin position="130"/>
        <end position="215"/>
    </location>
</feature>
<feature type="region of interest" description="5'-3' exonuclease domain" evidence="2">
    <location>
        <begin position="215"/>
        <end position="353"/>
    </location>
</feature>
<feature type="region of interest" description="Disordered" evidence="6">
    <location>
        <begin position="433"/>
        <end position="458"/>
    </location>
</feature>
<feature type="compositionally biased region" description="Basic residues" evidence="6">
    <location>
        <begin position="435"/>
        <end position="444"/>
    </location>
</feature>
<feature type="binding site" evidence="1">
    <location>
        <position position="30"/>
    </location>
    <ligand>
        <name>Mg(2+)</name>
        <dbReference type="ChEBI" id="CHEBI:18420"/>
        <label>1</label>
    </ligand>
</feature>
<feature type="binding site" evidence="2">
    <location>
        <position position="76"/>
    </location>
    <ligand>
        <name>Mg(2+)</name>
        <dbReference type="ChEBI" id="CHEBI:18420"/>
        <label>1</label>
    </ligand>
</feature>
<feature type="binding site" evidence="2">
    <location>
        <position position="142"/>
    </location>
    <ligand>
        <name>Mg(2+)</name>
        <dbReference type="ChEBI" id="CHEBI:18420"/>
        <label>1</label>
    </ligand>
</feature>
<feature type="binding site" evidence="3">
    <location>
        <position position="144"/>
    </location>
    <ligand>
        <name>Mg(2+)</name>
        <dbReference type="ChEBI" id="CHEBI:18420"/>
        <label>1</label>
    </ligand>
</feature>
<feature type="binding site" evidence="5">
    <location>
        <position position="163"/>
    </location>
    <ligand>
        <name>Mg(2+)</name>
        <dbReference type="ChEBI" id="CHEBI:18420"/>
        <label>2</label>
    </ligand>
</feature>
<feature type="binding site" evidence="5">
    <location>
        <position position="165"/>
    </location>
    <ligand>
        <name>Mg(2+)</name>
        <dbReference type="ChEBI" id="CHEBI:18420"/>
        <label>2</label>
    </ligand>
</feature>
<feature type="binding site" evidence="3">
    <location>
        <position position="215"/>
    </location>
    <ligand>
        <name>Mg(2+)</name>
        <dbReference type="ChEBI" id="CHEBI:18420"/>
        <label>2</label>
    </ligand>
</feature>
<feature type="splice variant" id="VSP_040519" description="In isoform 2." evidence="9">
    <location>
        <begin position="1"/>
        <end position="64"/>
    </location>
</feature>
<feature type="splice variant" id="VSP_040520" description="In isoform 2." evidence="9">
    <original>IALNCSIILVSDGAIPGIKVPTYKRRLKARFE</original>
    <variation>MMSNVALVVSSLHMMASFWIVFFDFVLYWFSQ</variation>
    <location>
        <begin position="65"/>
        <end position="96"/>
    </location>
</feature>
<feature type="mutagenesis site" description="Impaired nuclease activity." evidence="7">
    <original>D</original>
    <variation>A</variation>
    <location>
        <position position="76"/>
    </location>
</feature>
<evidence type="ECO:0000250" key="1">
    <source>
        <dbReference type="UniProtKB" id="P39748"/>
    </source>
</evidence>
<evidence type="ECO:0000250" key="2">
    <source>
        <dbReference type="UniProtKB" id="Q17RS7"/>
    </source>
</evidence>
<evidence type="ECO:0000250" key="3">
    <source>
        <dbReference type="UniProtKB" id="Q58839"/>
    </source>
</evidence>
<evidence type="ECO:0000250" key="4">
    <source>
        <dbReference type="UniProtKB" id="Q9LPD2"/>
    </source>
</evidence>
<evidence type="ECO:0000250" key="5">
    <source>
        <dbReference type="UniProtKB" id="Q9UQ84"/>
    </source>
</evidence>
<evidence type="ECO:0000256" key="6">
    <source>
        <dbReference type="SAM" id="MobiDB-lite"/>
    </source>
</evidence>
<evidence type="ECO:0000269" key="7">
    <source>
    </source>
</evidence>
<evidence type="ECO:0000269" key="8">
    <source>
    </source>
</evidence>
<evidence type="ECO:0000303" key="9">
    <source>
    </source>
</evidence>
<evidence type="ECO:0000303" key="10">
    <source>
    </source>
</evidence>
<evidence type="ECO:0000305" key="11"/>
<evidence type="ECO:0000312" key="12">
    <source>
        <dbReference type="Araport" id="AT3G48900"/>
    </source>
</evidence>
<evidence type="ECO:0000312" key="13">
    <source>
        <dbReference type="EMBL" id="CAB62019.1"/>
    </source>
</evidence>
<evidence type="ECO:0000312" key="14">
    <source>
        <dbReference type="EMBL" id="CAB87918.1"/>
    </source>
</evidence>
<reference key="1">
    <citation type="journal article" date="2000" name="Nature">
        <title>Sequence and analysis of chromosome 3 of the plant Arabidopsis thaliana.</title>
        <authorList>
            <person name="Salanoubat M."/>
            <person name="Lemcke K."/>
            <person name="Rieger M."/>
            <person name="Ansorge W."/>
            <person name="Unseld M."/>
            <person name="Fartmann B."/>
            <person name="Valle G."/>
            <person name="Bloecker H."/>
            <person name="Perez-Alonso M."/>
            <person name="Obermaier B."/>
            <person name="Delseny M."/>
            <person name="Boutry M."/>
            <person name="Grivell L.A."/>
            <person name="Mache R."/>
            <person name="Puigdomenech P."/>
            <person name="De Simone V."/>
            <person name="Choisne N."/>
            <person name="Artiguenave F."/>
            <person name="Robert C."/>
            <person name="Brottier P."/>
            <person name="Wincker P."/>
            <person name="Cattolico L."/>
            <person name="Weissenbach J."/>
            <person name="Saurin W."/>
            <person name="Quetier F."/>
            <person name="Schaefer M."/>
            <person name="Mueller-Auer S."/>
            <person name="Gabel C."/>
            <person name="Fuchs M."/>
            <person name="Benes V."/>
            <person name="Wurmbach E."/>
            <person name="Drzonek H."/>
            <person name="Erfle H."/>
            <person name="Jordan N."/>
            <person name="Bangert S."/>
            <person name="Wiedelmann R."/>
            <person name="Kranz H."/>
            <person name="Voss H."/>
            <person name="Holland R."/>
            <person name="Brandt P."/>
            <person name="Nyakatura G."/>
            <person name="Vezzi A."/>
            <person name="D'Angelo M."/>
            <person name="Pallavicini A."/>
            <person name="Toppo S."/>
            <person name="Simionati B."/>
            <person name="Conrad A."/>
            <person name="Hornischer K."/>
            <person name="Kauer G."/>
            <person name="Loehnert T.-H."/>
            <person name="Nordsiek G."/>
            <person name="Reichelt J."/>
            <person name="Scharfe M."/>
            <person name="Schoen O."/>
            <person name="Bargues M."/>
            <person name="Terol J."/>
            <person name="Climent J."/>
            <person name="Navarro P."/>
            <person name="Collado C."/>
            <person name="Perez-Perez A."/>
            <person name="Ottenwaelder B."/>
            <person name="Duchemin D."/>
            <person name="Cooke R."/>
            <person name="Laudie M."/>
            <person name="Berger-Llauro C."/>
            <person name="Purnelle B."/>
            <person name="Masuy D."/>
            <person name="de Haan M."/>
            <person name="Maarse A.C."/>
            <person name="Alcaraz J.-P."/>
            <person name="Cottet A."/>
            <person name="Casacuberta E."/>
            <person name="Monfort A."/>
            <person name="Argiriou A."/>
            <person name="Flores M."/>
            <person name="Liguori R."/>
            <person name="Vitale D."/>
            <person name="Mannhaupt G."/>
            <person name="Haase D."/>
            <person name="Schoof H."/>
            <person name="Rudd S."/>
            <person name="Zaccaria P."/>
            <person name="Mewes H.-W."/>
            <person name="Mayer K.F.X."/>
            <person name="Kaul S."/>
            <person name="Town C.D."/>
            <person name="Koo H.L."/>
            <person name="Tallon L.J."/>
            <person name="Jenkins J."/>
            <person name="Rooney T."/>
            <person name="Rizzo M."/>
            <person name="Walts A."/>
            <person name="Utterback T."/>
            <person name="Fujii C.Y."/>
            <person name="Shea T.P."/>
            <person name="Creasy T.H."/>
            <person name="Haas B."/>
            <person name="Maiti R."/>
            <person name="Wu D."/>
            <person name="Peterson J."/>
            <person name="Van Aken S."/>
            <person name="Pai G."/>
            <person name="Militscher J."/>
            <person name="Sellers P."/>
            <person name="Gill J.E."/>
            <person name="Feldblyum T.V."/>
            <person name="Preuss D."/>
            <person name="Lin X."/>
            <person name="Nierman W.C."/>
            <person name="Salzberg S.L."/>
            <person name="White O."/>
            <person name="Venter J.C."/>
            <person name="Fraser C.M."/>
            <person name="Kaneko T."/>
            <person name="Nakamura Y."/>
            <person name="Sato S."/>
            <person name="Kato T."/>
            <person name="Asamizu E."/>
            <person name="Sasamoto S."/>
            <person name="Kimura T."/>
            <person name="Idesawa K."/>
            <person name="Kawashima K."/>
            <person name="Kishida Y."/>
            <person name="Kiyokawa C."/>
            <person name="Kohara M."/>
            <person name="Matsumoto M."/>
            <person name="Matsuno A."/>
            <person name="Muraki A."/>
            <person name="Nakayama S."/>
            <person name="Nakazaki N."/>
            <person name="Shinpo S."/>
            <person name="Takeuchi C."/>
            <person name="Wada T."/>
            <person name="Watanabe A."/>
            <person name="Yamada M."/>
            <person name="Yasuda M."/>
            <person name="Tabata S."/>
        </authorList>
    </citation>
    <scope>NUCLEOTIDE SEQUENCE [LARGE SCALE GENOMIC DNA]</scope>
    <source>
        <strain>cv. Columbia</strain>
    </source>
</reference>
<reference key="2">
    <citation type="journal article" date="2017" name="Plant J.">
        <title>Araport11: a complete reannotation of the Arabidopsis thaliana reference genome.</title>
        <authorList>
            <person name="Cheng C.Y."/>
            <person name="Krishnakumar V."/>
            <person name="Chan A.P."/>
            <person name="Thibaud-Nissen F."/>
            <person name="Schobel S."/>
            <person name="Town C.D."/>
        </authorList>
    </citation>
    <scope>GENOME REANNOTATION</scope>
    <source>
        <strain>cv. Columbia</strain>
    </source>
</reference>
<reference key="3">
    <citation type="journal article" date="2003" name="Science">
        <title>Empirical analysis of transcriptional activity in the Arabidopsis genome.</title>
        <authorList>
            <person name="Yamada K."/>
            <person name="Lim J."/>
            <person name="Dale J.M."/>
            <person name="Chen H."/>
            <person name="Shinn P."/>
            <person name="Palm C.J."/>
            <person name="Southwick A.M."/>
            <person name="Wu H.C."/>
            <person name="Kim C.J."/>
            <person name="Nguyen M."/>
            <person name="Pham P.K."/>
            <person name="Cheuk R.F."/>
            <person name="Karlin-Newmann G."/>
            <person name="Liu S.X."/>
            <person name="Lam B."/>
            <person name="Sakano H."/>
            <person name="Wu T."/>
            <person name="Yu G."/>
            <person name="Miranda M."/>
            <person name="Quach H.L."/>
            <person name="Tripp M."/>
            <person name="Chang C.H."/>
            <person name="Lee J.M."/>
            <person name="Toriumi M.J."/>
            <person name="Chan M.M."/>
            <person name="Tang C.C."/>
            <person name="Onodera C.S."/>
            <person name="Deng J.M."/>
            <person name="Akiyama K."/>
            <person name="Ansari Y."/>
            <person name="Arakawa T."/>
            <person name="Banh J."/>
            <person name="Banno F."/>
            <person name="Bowser L."/>
            <person name="Brooks S.Y."/>
            <person name="Carninci P."/>
            <person name="Chao Q."/>
            <person name="Choy N."/>
            <person name="Enju A."/>
            <person name="Goldsmith A.D."/>
            <person name="Gurjal M."/>
            <person name="Hansen N.F."/>
            <person name="Hayashizaki Y."/>
            <person name="Johnson-Hopson C."/>
            <person name="Hsuan V.W."/>
            <person name="Iida K."/>
            <person name="Karnes M."/>
            <person name="Khan S."/>
            <person name="Koesema E."/>
            <person name="Ishida J."/>
            <person name="Jiang P.X."/>
            <person name="Jones T."/>
            <person name="Kawai J."/>
            <person name="Kamiya A."/>
            <person name="Meyers C."/>
            <person name="Nakajima M."/>
            <person name="Narusaka M."/>
            <person name="Seki M."/>
            <person name="Sakurai T."/>
            <person name="Satou M."/>
            <person name="Tamse R."/>
            <person name="Vaysberg M."/>
            <person name="Wallender E.K."/>
            <person name="Wong C."/>
            <person name="Yamamura Y."/>
            <person name="Yuan S."/>
            <person name="Shinozaki K."/>
            <person name="Davis R.W."/>
            <person name="Theologis A."/>
            <person name="Ecker J.R."/>
        </authorList>
    </citation>
    <scope>NUCLEOTIDE SEQUENCE [LARGE SCALE MRNA] (ISOFORM 2)</scope>
    <source>
        <strain>cv. Columbia</strain>
    </source>
</reference>
<reference key="4">
    <citation type="journal article" date="2014" name="Plant Physiol.">
        <title>AtGEN1 and AtSEND1, two paralogs in Arabidopsis, possess holliday junction resolvase activity.</title>
        <authorList>
            <person name="Bauknecht M."/>
            <person name="Kobbe D."/>
        </authorList>
    </citation>
    <scope>FUNCTION</scope>
    <scope>MUTAGENESIS OF ASP-76</scope>
    <source>
        <strain>cv. Columbia</strain>
    </source>
</reference>
<reference key="5">
    <citation type="journal article" date="2016" name="Plant Cell">
        <title>The structure-specific endonucleases MUS81 and SEND1 are essential for telomere stability in Arabidopsis.</title>
        <authorList>
            <person name="Olivier M."/>
            <person name="Da Ines O."/>
            <person name="Amiard S."/>
            <person name="Serra H."/>
            <person name="Goubely C."/>
            <person name="White C.I."/>
            <person name="Gallego M.E."/>
        </authorList>
    </citation>
    <scope>FUNCTION</scope>
    <scope>DISRUPTION PHENOTYPE</scope>
    <source>
        <strain>cv. Columbia</strain>
    </source>
</reference>
<dbReference type="EC" id="3.1.-.-"/>
<dbReference type="EMBL" id="AL132963">
    <property type="protein sequence ID" value="CAB87918.1"/>
    <property type="status" value="ALT_SEQ"/>
    <property type="molecule type" value="Genomic_DNA"/>
</dbReference>
<dbReference type="EMBL" id="AL132967">
    <property type="protein sequence ID" value="CAB62019.1"/>
    <property type="status" value="ALT_SEQ"/>
    <property type="molecule type" value="Genomic_DNA"/>
</dbReference>
<dbReference type="EMBL" id="CP002686">
    <property type="protein sequence ID" value="AEE78471.1"/>
    <property type="molecule type" value="Genomic_DNA"/>
</dbReference>
<dbReference type="EMBL" id="CP002686">
    <property type="protein sequence ID" value="AEE78472.1"/>
    <property type="molecule type" value="Genomic_DNA"/>
</dbReference>
<dbReference type="EMBL" id="AY075628">
    <property type="status" value="NOT_ANNOTATED_CDS"/>
    <property type="molecule type" value="mRNA"/>
</dbReference>
<dbReference type="PIR" id="T46139">
    <property type="entry name" value="T46139"/>
</dbReference>
<dbReference type="PIR" id="T49286">
    <property type="entry name" value="T49286"/>
</dbReference>
<dbReference type="RefSeq" id="NP_001118795.1">
    <molecule id="Q9M2Z3-1"/>
    <property type="nucleotide sequence ID" value="NM_001125323.2"/>
</dbReference>
<dbReference type="RefSeq" id="NP_190459.2">
    <molecule id="Q9M2Z3-2"/>
    <property type="nucleotide sequence ID" value="NM_114749.3"/>
</dbReference>
<dbReference type="SMR" id="Q9M2Z3"/>
<dbReference type="FunCoup" id="Q9M2Z3">
    <property type="interactions" value="439"/>
</dbReference>
<dbReference type="STRING" id="3702.Q9M2Z3"/>
<dbReference type="PaxDb" id="3702-AT3G48900.2"/>
<dbReference type="EnsemblPlants" id="AT3G48900.1">
    <molecule id="Q9M2Z3-2"/>
    <property type="protein sequence ID" value="AT3G48900.1"/>
    <property type="gene ID" value="AT3G48900"/>
</dbReference>
<dbReference type="EnsemblPlants" id="AT3G48900.2">
    <molecule id="Q9M2Z3-1"/>
    <property type="protein sequence ID" value="AT3G48900.2"/>
    <property type="gene ID" value="AT3G48900"/>
</dbReference>
<dbReference type="GeneID" id="824051"/>
<dbReference type="Gramene" id="AT3G48900.1">
    <molecule id="Q9M2Z3-2"/>
    <property type="protein sequence ID" value="AT3G48900.1"/>
    <property type="gene ID" value="AT3G48900"/>
</dbReference>
<dbReference type="Gramene" id="AT3G48900.2">
    <molecule id="Q9M2Z3-1"/>
    <property type="protein sequence ID" value="AT3G48900.2"/>
    <property type="gene ID" value="AT3G48900"/>
</dbReference>
<dbReference type="KEGG" id="ath:AT3G48900"/>
<dbReference type="Araport" id="AT3G48900"/>
<dbReference type="TAIR" id="AT3G48900">
    <property type="gene designation" value="SEND1"/>
</dbReference>
<dbReference type="eggNOG" id="KOG2519">
    <property type="taxonomic scope" value="Eukaryota"/>
</dbReference>
<dbReference type="HOGENOM" id="CLU_013777_2_1_1"/>
<dbReference type="InParanoid" id="Q9M2Z3"/>
<dbReference type="OMA" id="NKSHCAM"/>
<dbReference type="OrthoDB" id="2959108at2759"/>
<dbReference type="PhylomeDB" id="Q9M2Z3"/>
<dbReference type="PRO" id="PR:Q9M2Z3"/>
<dbReference type="Proteomes" id="UP000006548">
    <property type="component" value="Chromosome 3"/>
</dbReference>
<dbReference type="ExpressionAtlas" id="Q9M2Z3">
    <property type="expression patterns" value="baseline and differential"/>
</dbReference>
<dbReference type="GO" id="GO:0005634">
    <property type="term" value="C:nucleus"/>
    <property type="evidence" value="ECO:0007669"/>
    <property type="project" value="UniProtKB-SubCell"/>
</dbReference>
<dbReference type="GO" id="GO:0017108">
    <property type="term" value="F:5'-flap endonuclease activity"/>
    <property type="evidence" value="ECO:0000314"/>
    <property type="project" value="UniProtKB"/>
</dbReference>
<dbReference type="GO" id="GO:0008821">
    <property type="term" value="F:crossover junction DNA endonuclease activity"/>
    <property type="evidence" value="ECO:0000314"/>
    <property type="project" value="TAIR"/>
</dbReference>
<dbReference type="GO" id="GO:0046872">
    <property type="term" value="F:metal ion binding"/>
    <property type="evidence" value="ECO:0007669"/>
    <property type="project" value="UniProtKB-KW"/>
</dbReference>
<dbReference type="GO" id="GO:0006281">
    <property type="term" value="P:DNA repair"/>
    <property type="evidence" value="ECO:0000315"/>
    <property type="project" value="UniProtKB"/>
</dbReference>
<dbReference type="GO" id="GO:0000723">
    <property type="term" value="P:telomere maintenance"/>
    <property type="evidence" value="ECO:0000315"/>
    <property type="project" value="UniProtKB"/>
</dbReference>
<dbReference type="GO" id="GO:0009650">
    <property type="term" value="P:UV protection"/>
    <property type="evidence" value="ECO:0000316"/>
    <property type="project" value="UniProtKB"/>
</dbReference>
<dbReference type="CDD" id="cd09900">
    <property type="entry name" value="H3TH_XPG-like"/>
    <property type="match status" value="1"/>
</dbReference>
<dbReference type="CDD" id="cd09869">
    <property type="entry name" value="PIN_GEN1"/>
    <property type="match status" value="1"/>
</dbReference>
<dbReference type="FunFam" id="1.10.150.20:FF:000030">
    <property type="entry name" value="Flap endonuclease GEN-like 1"/>
    <property type="match status" value="1"/>
</dbReference>
<dbReference type="FunFam" id="3.40.50.1010:FF:000030">
    <property type="entry name" value="flap endonuclease GEN-like 2"/>
    <property type="match status" value="1"/>
</dbReference>
<dbReference type="Gene3D" id="2.40.50.40">
    <property type="match status" value="1"/>
</dbReference>
<dbReference type="Gene3D" id="1.10.150.20">
    <property type="entry name" value="5' to 3' exonuclease, C-terminal subdomain"/>
    <property type="match status" value="1"/>
</dbReference>
<dbReference type="Gene3D" id="3.40.50.1010">
    <property type="entry name" value="5'-nuclease"/>
    <property type="match status" value="1"/>
</dbReference>
<dbReference type="InterPro" id="IPR036279">
    <property type="entry name" value="5-3_exonuclease_C_sf"/>
</dbReference>
<dbReference type="InterPro" id="IPR016197">
    <property type="entry name" value="Chromo-like_dom_sf"/>
</dbReference>
<dbReference type="InterPro" id="IPR000953">
    <property type="entry name" value="Chromo/chromo_shadow_dom"/>
</dbReference>
<dbReference type="InterPro" id="IPR029060">
    <property type="entry name" value="PIN-like_dom_sf"/>
</dbReference>
<dbReference type="InterPro" id="IPR006086">
    <property type="entry name" value="XPG-I_dom"/>
</dbReference>
<dbReference type="InterPro" id="IPR006084">
    <property type="entry name" value="XPG/Rad2"/>
</dbReference>
<dbReference type="InterPro" id="IPR006085">
    <property type="entry name" value="XPG_DNA_repair_N"/>
</dbReference>
<dbReference type="PANTHER" id="PTHR11081">
    <property type="entry name" value="FLAP ENDONUCLEASE FAMILY MEMBER"/>
    <property type="match status" value="1"/>
</dbReference>
<dbReference type="PANTHER" id="PTHR11081:SF54">
    <property type="entry name" value="SINGLE-STRAND DNA ENDONUCLEASE 1"/>
    <property type="match status" value="1"/>
</dbReference>
<dbReference type="Pfam" id="PF25386">
    <property type="entry name" value="Chromo_SEND1"/>
    <property type="match status" value="1"/>
</dbReference>
<dbReference type="Pfam" id="PF00867">
    <property type="entry name" value="XPG_I"/>
    <property type="match status" value="1"/>
</dbReference>
<dbReference type="Pfam" id="PF00752">
    <property type="entry name" value="XPG_N"/>
    <property type="match status" value="1"/>
</dbReference>
<dbReference type="PRINTS" id="PR00853">
    <property type="entry name" value="XPGRADSUPER"/>
</dbReference>
<dbReference type="SMART" id="SM00484">
    <property type="entry name" value="XPGI"/>
    <property type="match status" value="1"/>
</dbReference>
<dbReference type="SMART" id="SM00485">
    <property type="entry name" value="XPGN"/>
    <property type="match status" value="1"/>
</dbReference>
<dbReference type="SUPFAM" id="SSF47807">
    <property type="entry name" value="5' to 3' exonuclease, C-terminal subdomain"/>
    <property type="match status" value="1"/>
</dbReference>
<dbReference type="SUPFAM" id="SSF54160">
    <property type="entry name" value="Chromo domain-like"/>
    <property type="match status" value="1"/>
</dbReference>
<dbReference type="SUPFAM" id="SSF88723">
    <property type="entry name" value="PIN domain-like"/>
    <property type="match status" value="1"/>
</dbReference>
<accession>Q9M2Z3</accession>
<accession>B3H5Z3</accession>
<accession>Q9SMT0</accession>
<gene>
    <name evidence="10" type="primary">SEND1</name>
    <name evidence="11" type="synonym">GEN2</name>
    <name evidence="12" type="ordered locus">At3g48900/At3g48910</name>
    <name evidence="13 14" type="ORF">T21J18.170/T2J13.250</name>
</gene>
<organism>
    <name type="scientific">Arabidopsis thaliana</name>
    <name type="common">Mouse-ear cress</name>
    <dbReference type="NCBI Taxonomy" id="3702"/>
    <lineage>
        <taxon>Eukaryota</taxon>
        <taxon>Viridiplantae</taxon>
        <taxon>Streptophyta</taxon>
        <taxon>Embryophyta</taxon>
        <taxon>Tracheophyta</taxon>
        <taxon>Spermatophyta</taxon>
        <taxon>Magnoliopsida</taxon>
        <taxon>eudicotyledons</taxon>
        <taxon>Gunneridae</taxon>
        <taxon>Pentapetalae</taxon>
        <taxon>rosids</taxon>
        <taxon>malvids</taxon>
        <taxon>Brassicales</taxon>
        <taxon>Brassicaceae</taxon>
        <taxon>Camelineae</taxon>
        <taxon>Arabidopsis</taxon>
    </lineage>
</organism>
<comment type="function">
    <text evidence="7 8">Endonuclease which cleaves flap structures at the junction between single-stranded DNA and double-stranded DNA with a specific cleavage site in the 5' overhang strand exactly one nucleotide 3' of the branch point (PubMed:25037209). Structure- and sequence-specific nuclease that resolves holliday junctions (HJs) by symmetrically oriented incisions in two opposing strands near the junction point, thus leading to ligatable products; HJs are physical links between homologous DNA molecules that arise as central intermediary structures during homologous recombination and repair in meiotic and somatic cells (PubMed:25037209). Structure-specific nuclease with 5'-flap endonuclease activity, preferentially cleaving static flaps 5' overhang strand exactly one nucleotide in the 3' direction of the branch point and, to lower extent, on the two neighboring positions (PubMed:25037209). Also able to cleave double-stranded flap strand 1 one nucleotide in the 3' direction of the branch point (PubMed:25037209). Together with MUS81, essential for the resolution of toxic replication structures to ensure genome stability, and to maintain telomere integrity and replication (PubMed:26704385).</text>
</comment>
<comment type="cofactor">
    <cofactor evidence="2">
        <name>Mg(2+)</name>
        <dbReference type="ChEBI" id="CHEBI:18420"/>
    </cofactor>
    <text evidence="2">Binds 2 magnesium ions per subunit. They probably participate in the reaction catalyzed by the enzyme. May bind an additional third magnesium ion after substrate binding.</text>
</comment>
<comment type="subcellular location">
    <subcellularLocation>
        <location evidence="2">Nucleus</location>
    </subcellularLocation>
</comment>
<comment type="alternative products">
    <event type="alternative splicing"/>
    <isoform>
        <id>Q9M2Z3-1</id>
        <name>1</name>
        <sequence type="displayed"/>
    </isoform>
    <isoform>
        <id>Q9M2Z3-2</id>
        <name>2</name>
        <sequence type="described" ref="VSP_040519 VSP_040520"/>
    </isoform>
</comment>
<comment type="disruption phenotype">
    <text evidence="8">Normal sensitivity to DNA damaging agents (PubMed:26704385). Mild UV sensitivity in the gen1 send1 double mutant (PubMed:26704385). The double mutant mus81 send1 exhibits severe developmental defects (e.g. strong growth retardation and impaired leaf and shoot development), increased endoreduplication, slower cell cycle progression, spontaneous cell death and genome instability associated with a dramatic loss of telomeric repeats (PubMed:26704385).</text>
</comment>
<comment type="miscellaneous">
    <molecule>Isoform 2</molecule>
    <text evidence="11">May be due to an intron retention.</text>
</comment>
<comment type="similarity">
    <text evidence="11">Belongs to the XPG/RAD2 endonuclease family. GEN subfamily.</text>
</comment>
<comment type="sequence caution" evidence="11">
    <conflict type="erroneous gene model prediction">
        <sequence resource="EMBL-CDS" id="CAB62019"/>
    </conflict>
    <text>Was originally thought to correspond to two different genes At3g48900 and At3g48910.</text>
</comment>
<comment type="sequence caution" evidence="11">
    <conflict type="erroneous gene model prediction">
        <sequence resource="EMBL-CDS" id="CAB87918"/>
    </conflict>
    <text>Was originally thought to correspond to two different genes At3g48900 and At3g48910.</text>
</comment>
<name>GENL2_ARATH</name>
<sequence length="600" mass="68181">MGVKYLWDVLEPCKKTFPLDHLQNKRVCVDLSCWMVELHKVNKSYCATKEKVYLRGFFHRLRALIALNCSIILVSDGAIPGIKVPTYKRRLKARFEIADDGVEPSKETSLKRNMGSEFSCIIKEAKVIASTLGILCLDGIEEAEAQCALLNSESLCDACFSFDSDIFLFGAKTVYREICLGEGGYVVCYEMDDIKKKLGLGRNSLIALALLLGSDYSQGVRGLRQEKACELVRSIGDNVILEKVASEGLSFAEKPRKSKKQVRPSVCSKKGTLPLVVINGNNRDPERLEEIKQVIDAFMNPKCHQADSNTVSRALAEFSFQRTKLQEICHQFFEWPPEKTDEYILPKVAERNLRRFANLQSRSTEVEVNLPLHKPQMPEKCPVSEIIKTRKVQGRECFEVSWNDLEGLESSIVPADLVERACPEKIIEFKEKMAAKKKKPKPKQKQKETSSPTKSSSLVELSLELQHLDLNSTSLVSRSTLEEAEQENEQQNSKKHDYLRLIDSPDRENCNNAWSNRDRLGVGMSSFPLYPETEVIDLISPCPEARSRSVSRSYQEQKSHDHQLETVIELSDSETDDEEHCKKARELRIFLQNIRKDIIL</sequence>
<keyword id="KW-0025">Alternative splicing</keyword>
<keyword id="KW-0227">DNA damage</keyword>
<keyword id="KW-0234">DNA repair</keyword>
<keyword id="KW-0255">Endonuclease</keyword>
<keyword id="KW-0378">Hydrolase</keyword>
<keyword id="KW-0460">Magnesium</keyword>
<keyword id="KW-0479">Metal-binding</keyword>
<keyword id="KW-0540">Nuclease</keyword>
<keyword id="KW-0539">Nucleus</keyword>
<keyword id="KW-1185">Reference proteome</keyword>
<proteinExistence type="evidence at protein level"/>
<protein>
    <recommendedName>
        <fullName evidence="10">Single-strand DNA endonuclease 1</fullName>
        <shortName evidence="10">AtSEND1</shortName>
        <ecNumber>3.1.-.-</ecNumber>
    </recommendedName>
    <alternativeName>
        <fullName evidence="11">Flap endonuclease GEN-like 2</fullName>
        <shortName evidence="11">XPG-like endonuclease 2</shortName>
    </alternativeName>
</protein>